<protein>
    <recommendedName>
        <fullName>Paired mesoderm homeobox protein 2B</fullName>
    </recommendedName>
    <alternativeName>
        <fullName>Neuroblastoma Phox</fullName>
        <shortName>NBPhox</shortName>
    </alternativeName>
    <alternativeName>
        <fullName>PHOX2B homeodomain protein</fullName>
    </alternativeName>
    <alternativeName>
        <fullName>Paired-like homeobox 2B</fullName>
    </alternativeName>
</protein>
<keyword id="KW-0002">3D-structure</keyword>
<keyword id="KW-0010">Activator</keyword>
<keyword id="KW-0217">Developmental protein</keyword>
<keyword id="KW-0225">Disease variant</keyword>
<keyword id="KW-0238">DNA-binding</keyword>
<keyword id="KW-0371">Homeobox</keyword>
<keyword id="KW-0539">Nucleus</keyword>
<keyword id="KW-1267">Proteomics identification</keyword>
<keyword id="KW-1185">Reference proteome</keyword>
<keyword id="KW-0804">Transcription</keyword>
<keyword id="KW-0805">Transcription regulation</keyword>
<keyword id="KW-0818">Triplet repeat expansion</keyword>
<organism>
    <name type="scientific">Homo sapiens</name>
    <name type="common">Human</name>
    <dbReference type="NCBI Taxonomy" id="9606"/>
    <lineage>
        <taxon>Eukaryota</taxon>
        <taxon>Metazoa</taxon>
        <taxon>Chordata</taxon>
        <taxon>Craniata</taxon>
        <taxon>Vertebrata</taxon>
        <taxon>Euteleostomi</taxon>
        <taxon>Mammalia</taxon>
        <taxon>Eutheria</taxon>
        <taxon>Euarchontoglires</taxon>
        <taxon>Primates</taxon>
        <taxon>Haplorrhini</taxon>
        <taxon>Catarrhini</taxon>
        <taxon>Hominidae</taxon>
        <taxon>Homo</taxon>
    </lineage>
</organism>
<comment type="function">
    <text>Involved in the development of several major noradrenergic neuron populations, including the locus coeruleus. Transcription factor which could determine a neurotransmitter phenotype in vertebrates. Enhances second-messenger-mediated activation of the dopamine beta-hydrolase and c-fos promoters, and of several enhancers including cAMP-response element and serum-response element.</text>
</comment>
<comment type="subunit">
    <text evidence="1">Interacts with TRIM11.</text>
</comment>
<comment type="subcellular location">
    <subcellularLocation>
        <location evidence="2">Nucleus</location>
    </subcellularLocation>
</comment>
<comment type="tissue specificity">
    <text>Expressed in neuroblastoma, brain and adrenal gland.</text>
</comment>
<comment type="disease" evidence="4 5 7">
    <disease id="DI-01391">
        <name>Central hypoventilation syndrome, congenital, 1</name>
        <acronym>CCHS1</acronym>
        <description>An autosomal dominant form of congenital central hypoventilation syndrome, a rare disorder characterized by abnormal control of respiration in the absence of neuromuscular or lung disease, or an identifiable brain stem lesion. A deficiency in autonomic control of respiration results in inadequate or negligible ventilatory and arousal responses to hypercapnia and hypoxemia.</description>
        <dbReference type="MIM" id="209880"/>
    </disease>
    <text>The disease is caused by variants affecting the gene represented in this entry.</text>
</comment>
<comment type="disease" evidence="10">
    <disease id="DI-02631">
        <name>Neuroblastoma 2</name>
        <acronym>NBLST2</acronym>
        <description>A common neoplasm of early childhood arising from embryonic cells that form the primitive neural crest and give rise to the adrenal medulla and the sympathetic nervous system.</description>
        <dbReference type="MIM" id="613013"/>
    </disease>
    <text>Disease susceptibility is associated with variants affecting the gene represented in this entry.</text>
</comment>
<comment type="similarity">
    <text evidence="9">Belongs to the paired homeobox family.</text>
</comment>
<sequence length="314" mass="31621">MYKMEYSYLNSSAYESCMAGMDTSSLASAYADFSSCSQASGFQYNPIRTTFGATSGCPSLTPGSCSLGTLRDHQSSPYAAVPYKLFTDHGGLNEKRKQRRIRTTFTSAQLKELERVFAETHYPDIYTREELALKIDLTEARVQVWFQNRRAKFRKQERAAAAAAAAAKNGSSGKKSDSSRDDESKEAKSTDPDSTGGPGPNPNPTPSCGANGGGGGGPSPAGAPGAAGPGGPGGEPGKGGAAAAAAAAAAAAAAAAAAAAGGLAAAGGPGQGWAPGPGPITSIPDSLGGPFASVLSSLQRPNGAKAALVKSSMF</sequence>
<feature type="chain" id="PRO_0000049262" description="Paired mesoderm homeobox protein 2B">
    <location>
        <begin position="1"/>
        <end position="314"/>
    </location>
</feature>
<feature type="DNA-binding region" description="Homeobox" evidence="2">
    <location>
        <begin position="98"/>
        <end position="157"/>
    </location>
</feature>
<feature type="region of interest" description="Disordered" evidence="3">
    <location>
        <begin position="162"/>
        <end position="246"/>
    </location>
</feature>
<feature type="region of interest" description="Disordered" evidence="3">
    <location>
        <begin position="259"/>
        <end position="289"/>
    </location>
</feature>
<feature type="compositionally biased region" description="Low complexity" evidence="3">
    <location>
        <begin position="162"/>
        <end position="173"/>
    </location>
</feature>
<feature type="compositionally biased region" description="Basic and acidic residues" evidence="3">
    <location>
        <begin position="174"/>
        <end position="191"/>
    </location>
</feature>
<feature type="compositionally biased region" description="Gly residues" evidence="3">
    <location>
        <begin position="210"/>
        <end position="240"/>
    </location>
</feature>
<feature type="compositionally biased region" description="Gly residues" evidence="3">
    <location>
        <begin position="264"/>
        <end position="275"/>
    </location>
</feature>
<feature type="sequence variant" id="VAR_026969" description="Confers susceptibility to neuroblastoma; found as germline mutation in a neuroblastoma family; dbSNP:rs104893855." evidence="6">
    <original>R</original>
    <variation>L</variation>
    <location>
        <position position="100"/>
    </location>
</feature>
<feature type="sequence variant" id="VAR_026970" description="In dbSNP:rs28939716." evidence="6">
    <original>R</original>
    <variation>G</variation>
    <location>
        <position position="141"/>
    </location>
</feature>
<feature type="sequence variant" id="VAR_046900" description="In CCHS1; dbSNP:rs1733941453." evidence="7">
    <original>R</original>
    <variation>Q</variation>
    <location>
        <position position="141"/>
    </location>
</feature>
<feature type="sequence variant" id="VAR_046901" description="In CCHS1." evidence="7">
    <original>Q</original>
    <variation>R</variation>
    <location>
        <position position="143"/>
    </location>
</feature>
<feature type="sequence variant" id="VAR_046902" description="Confers susceptibility to neuroblastoma; dbSNP:rs104893856." evidence="8">
    <original>G</original>
    <variation>D</variation>
    <location>
        <position position="197"/>
    </location>
</feature>
<feature type="sequence variant" id="VAR_018257" description="In CCHS1." evidence="5">
    <original>A</original>
    <variation>AAAAAAAAAAA</variation>
    <location>
        <position position="241"/>
    </location>
</feature>
<feature type="sequence variant" id="VAR_018258" evidence="5">
    <location>
        <begin position="254"/>
        <end position="258"/>
    </location>
</feature>
<feature type="sequence variant" id="VAR_018259" evidence="5">
    <location>
        <begin position="255"/>
        <end position="259"/>
    </location>
</feature>
<feature type="sequence conflict" description="In Ref. 1; BAA11555, 2; AAD26698 and 3; BAA82670." evidence="9" ref="1 2 3">
    <original>A</original>
    <variation>G</variation>
    <location>
        <position position="292"/>
    </location>
</feature>
<feature type="helix" evidence="11">
    <location>
        <begin position="107"/>
        <end position="119"/>
    </location>
</feature>
<feature type="helix" evidence="11">
    <location>
        <begin position="125"/>
        <end position="135"/>
    </location>
</feature>
<feature type="helix" evidence="11">
    <location>
        <begin position="139"/>
        <end position="156"/>
    </location>
</feature>
<accession>Q99453</accession>
<accession>Q6PJD9</accession>
<evidence type="ECO:0000250" key="1"/>
<evidence type="ECO:0000255" key="2">
    <source>
        <dbReference type="PROSITE-ProRule" id="PRU00108"/>
    </source>
</evidence>
<evidence type="ECO:0000256" key="3">
    <source>
        <dbReference type="SAM" id="MobiDB-lite"/>
    </source>
</evidence>
<evidence type="ECO:0000269" key="4">
    <source>
    </source>
</evidence>
<evidence type="ECO:0000269" key="5">
    <source>
    </source>
</evidence>
<evidence type="ECO:0000269" key="6">
    <source>
    </source>
</evidence>
<evidence type="ECO:0000269" key="7">
    <source>
    </source>
</evidence>
<evidence type="ECO:0000269" key="8">
    <source>
    </source>
</evidence>
<evidence type="ECO:0000305" key="9"/>
<evidence type="ECO:0000305" key="10">
    <source>
    </source>
</evidence>
<evidence type="ECO:0007829" key="11">
    <source>
        <dbReference type="PDB" id="8P7G"/>
    </source>
</evidence>
<name>PHX2B_HUMAN</name>
<proteinExistence type="evidence at protein level"/>
<gene>
    <name type="primary">PHOX2B</name>
    <name type="synonym">PMX2B</name>
</gene>
<reference key="1">
    <citation type="journal article" date="1996" name="DNA Res.">
        <title>Identification and cloning of neuroblastoma-specific and nerve tissue-specific genes through compiled expression profiles.</title>
        <authorList>
            <person name="Yokoyama M."/>
            <person name="Nishi Y."/>
            <person name="Yoshii J."/>
            <person name="Okubo K."/>
            <person name="Matsubara K."/>
        </authorList>
    </citation>
    <scope>NUCLEOTIDE SEQUENCE [MRNA]</scope>
    <source>
        <tissue>Neuroblastoma</tissue>
    </source>
</reference>
<reference key="2">
    <citation type="journal article" date="2000" name="DNA Cell Biol.">
        <title>Paired-like homeodomain proteins Phox2a/Arix and Phox2b/NBPhox have similar genetic organization and independently regulate dopamine beta-hydroxylase gene transcription.</title>
        <authorList>
            <person name="Adachi M."/>
            <person name="Browne D."/>
            <person name="Lewis E.J."/>
        </authorList>
    </citation>
    <scope>NUCLEOTIDE SEQUENCE [GENOMIC DNA]</scope>
</reference>
<reference key="3">
    <citation type="journal article" date="1999" name="Genomics">
        <title>Genomic structure and functional characterization of NBPhox (PMX2B), a homeodomain protein specific to catecholaminergic cells that is involved in second messenger-mediated transcriptional activation.</title>
        <authorList>
            <person name="Yokoyama M."/>
            <person name="Watanabe H."/>
            <person name="Nakamura M."/>
        </authorList>
    </citation>
    <scope>NUCLEOTIDE SEQUENCE [GENOMIC DNA]</scope>
</reference>
<reference key="4">
    <citation type="journal article" date="2004" name="Genome Res.">
        <title>The status, quality, and expansion of the NIH full-length cDNA project: the Mammalian Gene Collection (MGC).</title>
        <authorList>
            <consortium name="The MGC Project Team"/>
        </authorList>
    </citation>
    <scope>NUCLEOTIDE SEQUENCE [LARGE SCALE MRNA]</scope>
    <source>
        <tissue>Brain</tissue>
    </source>
</reference>
<reference key="5">
    <citation type="journal article" date="2003" name="Hum. Genet.">
        <title>Molecular analysis of congenital central hypoventilation syndrome.</title>
        <authorList>
            <person name="Sasaki A."/>
            <person name="Kanai M."/>
            <person name="Kijima K."/>
            <person name="Akaba K."/>
            <person name="Hashimoto M."/>
            <person name="Hasegawa H."/>
            <person name="Otaki S."/>
            <person name="Koizumi T."/>
            <person name="Kusuda S."/>
            <person name="Ogawa Y."/>
            <person name="Tuchiya K."/>
            <person name="Yamamoto W."/>
            <person name="Nakamura T."/>
            <person name="Hayasaka K."/>
        </authorList>
    </citation>
    <scope>VARIANT CCHS1 ALA-ALA-ALA-ALA-ALA-ALA-ALA-ALA-ALA-ALA-241 INS</scope>
    <scope>VARIANTS 254-ALA--ALA-258 DEL AND 255-ALA--ALA-259 DEL</scope>
</reference>
<reference key="6">
    <citation type="journal article" date="2003" name="Nat. Genet.">
        <title>Polyalanine expansion and frameshift mutations of the paired-like homeobox gene PHOX2B in congenital central hypoventilation syndrome.</title>
        <authorList>
            <person name="Amiel J."/>
            <person name="Laudier B."/>
            <person name="Attie-Bitach T."/>
            <person name="Trang H."/>
            <person name="de Pontual L."/>
            <person name="Gener B."/>
            <person name="Trochet D."/>
            <person name="Etchevers H."/>
            <person name="Ray P."/>
            <person name="Simonneau M."/>
            <person name="Vekemans M."/>
            <person name="Munnich A."/>
            <person name="Gaultier C."/>
            <person name="Lyonnet S."/>
        </authorList>
    </citation>
    <scope>INVOLVEMENT IN CCHS1</scope>
    <scope>TRIPLET REPEAT EXPANSION</scope>
</reference>
<reference key="7">
    <citation type="journal article" date="2004" name="Am. J. Hum. Genet.">
        <title>Germline mutations of the paired-like homeobox 2B (PHOX2B) gene in neuroblastoma.</title>
        <authorList>
            <person name="Trochet D."/>
            <person name="Bourdeaut F."/>
            <person name="Janoueix-Lerosey I."/>
            <person name="Deville A."/>
            <person name="de Pontual L."/>
            <person name="Schleiermacher G."/>
            <person name="Coze C."/>
            <person name="Philip N."/>
            <person name="Frebourg T."/>
            <person name="Munnich A."/>
            <person name="Lyonnet S."/>
            <person name="Delattre O."/>
            <person name="Amiel J."/>
        </authorList>
    </citation>
    <scope>VARIANTS LEU-100 AND GLY-141</scope>
    <scope>POSSIBLE INVOLVEMENT IN NBLST2</scope>
</reference>
<reference key="8">
    <citation type="journal article" date="2005" name="Am. J. Hum. Genet.">
        <title>PHOX2B genotype allows for prediction of tumor risk in congenital central hypoventilation syndrome.</title>
        <authorList>
            <person name="Trochet D."/>
            <person name="O'Brien L.M."/>
            <person name="Gozal D."/>
            <person name="Trang H."/>
            <person name="Nordenskjoeld A."/>
            <person name="Laudier B."/>
            <person name="Svensson P.-J."/>
            <person name="Uhrig S."/>
            <person name="Cole T."/>
            <person name="Niemann S."/>
            <person name="Munnich A."/>
            <person name="Gaultier C."/>
            <person name="Lyonnet S."/>
            <person name="Amiel J."/>
        </authorList>
    </citation>
    <scope>VARIANTS CCHS1 GLN-141 AND ARG-143</scope>
    <scope>TRIPLET REPEAT EXPANSION</scope>
</reference>
<reference key="9">
    <citation type="journal article" date="2002" name="Am. J. Hum. Genet.">
        <authorList>
            <person name="Trochet D."/>
            <person name="O'Brien L.M."/>
            <person name="Gozal D."/>
            <person name="Trang H."/>
            <person name="Nordenskjoeld A."/>
            <person name="Laudier B."/>
            <person name="Svensson P.-J."/>
            <person name="Uhrig S."/>
            <person name="Cole T."/>
            <person name="Niemann S."/>
            <person name="Munnich A."/>
            <person name="Gaultier C."/>
            <person name="Lyonnet S."/>
            <person name="Amiel J."/>
        </authorList>
    </citation>
    <scope>ERRATUM OF PUBMED:15657873</scope>
</reference>
<reference key="10">
    <citation type="journal article" date="2006" name="Am. J. Med. Genet. A">
        <title>PHOX2B analysis in non-syndromic neuroblastoma cases shows novel mutations and genotype-phenotype associations.</title>
        <authorList>
            <person name="McConville C."/>
            <person name="Reid S."/>
            <person name="Baskcomb L."/>
            <person name="Douglas J."/>
            <person name="Rahman N."/>
        </authorList>
    </citation>
    <scope>VARIANT ASP-197</scope>
    <scope>NEUROBLASTOMA SUSCEPTIBILITY</scope>
</reference>
<dbReference type="EMBL" id="D82344">
    <property type="protein sequence ID" value="BAA11555.1"/>
    <property type="molecule type" value="mRNA"/>
</dbReference>
<dbReference type="EMBL" id="AF117979">
    <property type="protein sequence ID" value="AAD26698.1"/>
    <property type="molecule type" value="Genomic_DNA"/>
</dbReference>
<dbReference type="EMBL" id="AB015671">
    <property type="protein sequence ID" value="BAA82670.1"/>
    <property type="molecule type" value="Genomic_DNA"/>
</dbReference>
<dbReference type="EMBL" id="BC017199">
    <property type="protein sequence ID" value="AAH17199.1"/>
    <property type="molecule type" value="mRNA"/>
</dbReference>
<dbReference type="CCDS" id="CCDS3463.1"/>
<dbReference type="PIR" id="JC5273">
    <property type="entry name" value="JC5273"/>
</dbReference>
<dbReference type="RefSeq" id="NP_003915.2">
    <property type="nucleotide sequence ID" value="NM_003924.3"/>
</dbReference>
<dbReference type="PDB" id="7MJA">
    <property type="method" value="X-ray"/>
    <property type="resolution" value="1.69 A"/>
    <property type="chains" value="C=43-51"/>
</dbReference>
<dbReference type="PDB" id="8EK5">
    <property type="method" value="X-ray"/>
    <property type="resolution" value="2.11 A"/>
    <property type="chains" value="C=43-51"/>
</dbReference>
<dbReference type="PDB" id="8P7G">
    <property type="method" value="NMR"/>
    <property type="chains" value="A=98-158"/>
</dbReference>
<dbReference type="PDB" id="8PTL">
    <property type="method" value="NMR"/>
    <property type="chains" value="A=228-314"/>
</dbReference>
<dbReference type="PDB" id="8PUI">
    <property type="method" value="NMR"/>
    <property type="chains" value="A=228-314"/>
</dbReference>
<dbReference type="PDBsum" id="7MJA"/>
<dbReference type="PDBsum" id="8EK5"/>
<dbReference type="PDBsum" id="8P7G"/>
<dbReference type="PDBsum" id="8PTL"/>
<dbReference type="PDBsum" id="8PUI"/>
<dbReference type="SMR" id="Q99453"/>
<dbReference type="BioGRID" id="114443">
    <property type="interactions" value="4"/>
</dbReference>
<dbReference type="FunCoup" id="Q99453">
    <property type="interactions" value="775"/>
</dbReference>
<dbReference type="STRING" id="9606.ENSP00000226382"/>
<dbReference type="GlyGen" id="Q99453">
    <property type="glycosylation" value="1 site"/>
</dbReference>
<dbReference type="iPTMnet" id="Q99453"/>
<dbReference type="PhosphoSitePlus" id="Q99453"/>
<dbReference type="BioMuta" id="PHOX2B"/>
<dbReference type="DMDM" id="116242712"/>
<dbReference type="jPOST" id="Q99453"/>
<dbReference type="MassIVE" id="Q99453"/>
<dbReference type="PaxDb" id="9606-ENSP00000226382"/>
<dbReference type="PeptideAtlas" id="Q99453"/>
<dbReference type="ProteomicsDB" id="78274"/>
<dbReference type="Antibodypedia" id="11895">
    <property type="antibodies" value="197 antibodies from 33 providers"/>
</dbReference>
<dbReference type="DNASU" id="8929"/>
<dbReference type="Ensembl" id="ENST00000226382.4">
    <property type="protein sequence ID" value="ENSP00000226382.2"/>
    <property type="gene ID" value="ENSG00000109132.7"/>
</dbReference>
<dbReference type="GeneID" id="8929"/>
<dbReference type="KEGG" id="hsa:8929"/>
<dbReference type="MANE-Select" id="ENST00000226382.4">
    <property type="protein sequence ID" value="ENSP00000226382.2"/>
    <property type="RefSeq nucleotide sequence ID" value="NM_003924.4"/>
    <property type="RefSeq protein sequence ID" value="NP_003915.2"/>
</dbReference>
<dbReference type="UCSC" id="uc003gwf.4">
    <property type="organism name" value="human"/>
</dbReference>
<dbReference type="AGR" id="HGNC:9143"/>
<dbReference type="CTD" id="8929"/>
<dbReference type="DisGeNET" id="8929"/>
<dbReference type="GeneCards" id="PHOX2B"/>
<dbReference type="GeneReviews" id="PHOX2B"/>
<dbReference type="HGNC" id="HGNC:9143">
    <property type="gene designation" value="PHOX2B"/>
</dbReference>
<dbReference type="HPA" id="ENSG00000109132">
    <property type="expression patterns" value="Group enriched (adrenal gland, intestine)"/>
</dbReference>
<dbReference type="MalaCards" id="PHOX2B"/>
<dbReference type="MIM" id="209880">
    <property type="type" value="phenotype"/>
</dbReference>
<dbReference type="MIM" id="603851">
    <property type="type" value="gene"/>
</dbReference>
<dbReference type="MIM" id="613013">
    <property type="type" value="phenotype"/>
</dbReference>
<dbReference type="neXtProt" id="NX_Q99453"/>
<dbReference type="OpenTargets" id="ENSG00000109132"/>
<dbReference type="Orphanet" id="661">
    <property type="disease" value="Congenital central hypoventilation syndrome"/>
</dbReference>
<dbReference type="Orphanet" id="99803">
    <property type="disease" value="Haddad syndrome"/>
</dbReference>
<dbReference type="Orphanet" id="2151">
    <property type="disease" value="Hirschsprung disease-ganglioneuroblastoma syndrome"/>
</dbReference>
<dbReference type="Orphanet" id="635">
    <property type="disease" value="Neuroblastoma"/>
</dbReference>
<dbReference type="PharmGKB" id="PA33467"/>
<dbReference type="VEuPathDB" id="HostDB:ENSG00000109132"/>
<dbReference type="eggNOG" id="KOG0484">
    <property type="taxonomic scope" value="Eukaryota"/>
</dbReference>
<dbReference type="GeneTree" id="ENSGT00940000159958"/>
<dbReference type="HOGENOM" id="CLU_081152_0_0_1"/>
<dbReference type="InParanoid" id="Q99453"/>
<dbReference type="OMA" id="QSQGWAT"/>
<dbReference type="OrthoDB" id="6159439at2759"/>
<dbReference type="PAN-GO" id="Q99453">
    <property type="GO annotations" value="4 GO annotations based on evolutionary models"/>
</dbReference>
<dbReference type="PhylomeDB" id="Q99453"/>
<dbReference type="TreeFam" id="TF351612"/>
<dbReference type="PathwayCommons" id="Q99453"/>
<dbReference type="SignaLink" id="Q99453"/>
<dbReference type="SIGNOR" id="Q99453"/>
<dbReference type="BioGRID-ORCS" id="8929">
    <property type="hits" value="14 hits in 1167 CRISPR screens"/>
</dbReference>
<dbReference type="ChiTaRS" id="PHOX2B">
    <property type="organism name" value="human"/>
</dbReference>
<dbReference type="GeneWiki" id="PHOX2B"/>
<dbReference type="GenomeRNAi" id="8929"/>
<dbReference type="Pharos" id="Q99453">
    <property type="development level" value="Tbio"/>
</dbReference>
<dbReference type="PRO" id="PR:Q99453"/>
<dbReference type="Proteomes" id="UP000005640">
    <property type="component" value="Chromosome 4"/>
</dbReference>
<dbReference type="RNAct" id="Q99453">
    <property type="molecule type" value="protein"/>
</dbReference>
<dbReference type="Bgee" id="ENSG00000109132">
    <property type="expression patterns" value="Expressed in muscle layer of sigmoid colon and 40 other cell types or tissues"/>
</dbReference>
<dbReference type="GO" id="GO:0000785">
    <property type="term" value="C:chromatin"/>
    <property type="evidence" value="ECO:0000314"/>
    <property type="project" value="BHF-UCL"/>
</dbReference>
<dbReference type="GO" id="GO:0005654">
    <property type="term" value="C:nucleoplasm"/>
    <property type="evidence" value="ECO:0000314"/>
    <property type="project" value="HPA"/>
</dbReference>
<dbReference type="GO" id="GO:0001228">
    <property type="term" value="F:DNA-binding transcription activator activity, RNA polymerase II-specific"/>
    <property type="evidence" value="ECO:0000314"/>
    <property type="project" value="NTNU_SB"/>
</dbReference>
<dbReference type="GO" id="GO:0000981">
    <property type="term" value="F:DNA-binding transcription factor activity, RNA polymerase II-specific"/>
    <property type="evidence" value="ECO:0000247"/>
    <property type="project" value="NTNU_SB"/>
</dbReference>
<dbReference type="GO" id="GO:0000978">
    <property type="term" value="F:RNA polymerase II cis-regulatory region sequence-specific DNA binding"/>
    <property type="evidence" value="ECO:0000314"/>
    <property type="project" value="BHF-UCL"/>
</dbReference>
<dbReference type="GO" id="GO:0000977">
    <property type="term" value="F:RNA polymerase II transcription regulatory region sequence-specific DNA binding"/>
    <property type="evidence" value="ECO:0000314"/>
    <property type="project" value="BHF-UCL"/>
</dbReference>
<dbReference type="GO" id="GO:1990837">
    <property type="term" value="F:sequence-specific double-stranded DNA binding"/>
    <property type="evidence" value="ECO:0000314"/>
    <property type="project" value="ARUK-UCL"/>
</dbReference>
<dbReference type="GO" id="GO:0048483">
    <property type="term" value="P:autonomic nervous system development"/>
    <property type="evidence" value="ECO:0000315"/>
    <property type="project" value="BHF-UCL"/>
</dbReference>
<dbReference type="GO" id="GO:0003360">
    <property type="term" value="P:brainstem development"/>
    <property type="evidence" value="ECO:0000270"/>
    <property type="project" value="BHF-UCL"/>
</dbReference>
<dbReference type="GO" id="GO:0021533">
    <property type="term" value="P:cell differentiation in hindbrain"/>
    <property type="evidence" value="ECO:0000250"/>
    <property type="project" value="BHF-UCL"/>
</dbReference>
<dbReference type="GO" id="GO:0071773">
    <property type="term" value="P:cellular response to BMP stimulus"/>
    <property type="evidence" value="ECO:0000250"/>
    <property type="project" value="BHF-UCL"/>
</dbReference>
<dbReference type="GO" id="GO:0071244">
    <property type="term" value="P:cellular response to carbon dioxide"/>
    <property type="evidence" value="ECO:0007669"/>
    <property type="project" value="Ensembl"/>
</dbReference>
<dbReference type="GO" id="GO:0071542">
    <property type="term" value="P:dopaminergic neuron differentiation"/>
    <property type="evidence" value="ECO:0000250"/>
    <property type="project" value="BHF-UCL"/>
</dbReference>
<dbReference type="GO" id="GO:0048894">
    <property type="term" value="P:efferent axon development in a lateral line nerve"/>
    <property type="evidence" value="ECO:0000250"/>
    <property type="project" value="BHF-UCL"/>
</dbReference>
<dbReference type="GO" id="GO:0048484">
    <property type="term" value="P:enteric nervous system development"/>
    <property type="evidence" value="ECO:0000270"/>
    <property type="project" value="BHF-UCL"/>
</dbReference>
<dbReference type="GO" id="GO:0010001">
    <property type="term" value="P:glial cell differentiation"/>
    <property type="evidence" value="ECO:0000250"/>
    <property type="project" value="BHF-UCL"/>
</dbReference>
<dbReference type="GO" id="GO:0021934">
    <property type="term" value="P:hindbrain tangential cell migration"/>
    <property type="evidence" value="ECO:0000250"/>
    <property type="project" value="BHF-UCL"/>
</dbReference>
<dbReference type="GO" id="GO:0048839">
    <property type="term" value="P:inner ear development"/>
    <property type="evidence" value="ECO:0000250"/>
    <property type="project" value="BHF-UCL"/>
</dbReference>
<dbReference type="GO" id="GO:0021723">
    <property type="term" value="P:medullary reticular formation development"/>
    <property type="evidence" value="ECO:0000250"/>
    <property type="project" value="BHF-UCL"/>
</dbReference>
<dbReference type="GO" id="GO:0051899">
    <property type="term" value="P:membrane depolarization"/>
    <property type="evidence" value="ECO:0007669"/>
    <property type="project" value="Ensembl"/>
</dbReference>
<dbReference type="GO" id="GO:0097475">
    <property type="term" value="P:motor neuron migration"/>
    <property type="evidence" value="ECO:0007669"/>
    <property type="project" value="Ensembl"/>
</dbReference>
<dbReference type="GO" id="GO:0045665">
    <property type="term" value="P:negative regulation of neuron differentiation"/>
    <property type="evidence" value="ECO:0007669"/>
    <property type="project" value="Ensembl"/>
</dbReference>
<dbReference type="GO" id="GO:1904691">
    <property type="term" value="P:negative regulation of type B pancreatic cell proliferation"/>
    <property type="evidence" value="ECO:0007669"/>
    <property type="project" value="Ensembl"/>
</dbReference>
<dbReference type="GO" id="GO:1901166">
    <property type="term" value="P:neural crest cell migration involved in autonomic nervous system development"/>
    <property type="evidence" value="ECO:0000250"/>
    <property type="project" value="BHF-UCL"/>
</dbReference>
<dbReference type="GO" id="GO:0001764">
    <property type="term" value="P:neuron migration"/>
    <property type="evidence" value="ECO:0000250"/>
    <property type="project" value="BHF-UCL"/>
</dbReference>
<dbReference type="GO" id="GO:0003358">
    <property type="term" value="P:noradrenergic neuron development"/>
    <property type="evidence" value="ECO:0000250"/>
    <property type="project" value="UniProtKB"/>
</dbReference>
<dbReference type="GO" id="GO:0003357">
    <property type="term" value="P:noradrenergic neuron differentiation"/>
    <property type="evidence" value="ECO:0000250"/>
    <property type="project" value="BHF-UCL"/>
</dbReference>
<dbReference type="GO" id="GO:0048486">
    <property type="term" value="P:parasympathetic nervous system development"/>
    <property type="evidence" value="ECO:0000250"/>
    <property type="project" value="BHF-UCL"/>
</dbReference>
<dbReference type="GO" id="GO:0120162">
    <property type="term" value="P:positive regulation of cold-induced thermogenesis"/>
    <property type="evidence" value="ECO:0000250"/>
    <property type="project" value="YuBioLab"/>
</dbReference>
<dbReference type="GO" id="GO:0010971">
    <property type="term" value="P:positive regulation of G2/M transition of mitotic cell cycle"/>
    <property type="evidence" value="ECO:0000250"/>
    <property type="project" value="UniProtKB"/>
</dbReference>
<dbReference type="GO" id="GO:0045666">
    <property type="term" value="P:positive regulation of neuron differentiation"/>
    <property type="evidence" value="ECO:0007669"/>
    <property type="project" value="Ensembl"/>
</dbReference>
<dbReference type="GO" id="GO:0045944">
    <property type="term" value="P:positive regulation of transcription by RNA polymerase II"/>
    <property type="evidence" value="ECO:0000314"/>
    <property type="project" value="BHF-UCL"/>
</dbReference>
<dbReference type="GO" id="GO:0010468">
    <property type="term" value="P:regulation of gene expression"/>
    <property type="evidence" value="ECO:0000250"/>
    <property type="project" value="UniProtKB"/>
</dbReference>
<dbReference type="GO" id="GO:0002087">
    <property type="term" value="P:regulation of respiratory gaseous exchange by nervous system process"/>
    <property type="evidence" value="ECO:0000250"/>
    <property type="project" value="BHF-UCL"/>
</dbReference>
<dbReference type="GO" id="GO:0006357">
    <property type="term" value="P:regulation of transcription by RNA polymerase II"/>
    <property type="evidence" value="ECO:0000314"/>
    <property type="project" value="MGI"/>
</dbReference>
<dbReference type="GO" id="GO:0060541">
    <property type="term" value="P:respiratory system development"/>
    <property type="evidence" value="ECO:0000250"/>
    <property type="project" value="BHF-UCL"/>
</dbReference>
<dbReference type="GO" id="GO:0014823">
    <property type="term" value="P:response to activity"/>
    <property type="evidence" value="ECO:0007669"/>
    <property type="project" value="Ensembl"/>
</dbReference>
<dbReference type="GO" id="GO:0061452">
    <property type="term" value="P:retrotrapezoid nucleus neuron differentiation"/>
    <property type="evidence" value="ECO:0000250"/>
    <property type="project" value="BHF-UCL"/>
</dbReference>
<dbReference type="GO" id="GO:0035914">
    <property type="term" value="P:skeletal muscle cell differentiation"/>
    <property type="evidence" value="ECO:0007669"/>
    <property type="project" value="Ensembl"/>
</dbReference>
<dbReference type="GO" id="GO:0061549">
    <property type="term" value="P:sympathetic ganglion development"/>
    <property type="evidence" value="ECO:0000250"/>
    <property type="project" value="UniProtKB"/>
</dbReference>
<dbReference type="GO" id="GO:0048485">
    <property type="term" value="P:sympathetic nervous system development"/>
    <property type="evidence" value="ECO:0000250"/>
    <property type="project" value="BHF-UCL"/>
</dbReference>
<dbReference type="GO" id="GO:0044342">
    <property type="term" value="P:type B pancreatic cell proliferation"/>
    <property type="evidence" value="ECO:0007669"/>
    <property type="project" value="Ensembl"/>
</dbReference>
<dbReference type="CDD" id="cd00086">
    <property type="entry name" value="homeodomain"/>
    <property type="match status" value="1"/>
</dbReference>
<dbReference type="FunFam" id="1.10.10.60:FF:000207">
    <property type="entry name" value="paired mesoderm homeobox protein 2A"/>
    <property type="match status" value="1"/>
</dbReference>
<dbReference type="Gene3D" id="1.10.10.60">
    <property type="entry name" value="Homeodomain-like"/>
    <property type="match status" value="1"/>
</dbReference>
<dbReference type="InterPro" id="IPR001356">
    <property type="entry name" value="HD"/>
</dbReference>
<dbReference type="InterPro" id="IPR017970">
    <property type="entry name" value="Homeobox_CS"/>
</dbReference>
<dbReference type="InterPro" id="IPR009057">
    <property type="entry name" value="Homeodomain-like_sf"/>
</dbReference>
<dbReference type="InterPro" id="IPR050649">
    <property type="entry name" value="Paired_Homeobox_TFs"/>
</dbReference>
<dbReference type="PANTHER" id="PTHR24329">
    <property type="entry name" value="HOMEOBOX PROTEIN ARISTALESS"/>
    <property type="match status" value="1"/>
</dbReference>
<dbReference type="PANTHER" id="PTHR24329:SF301">
    <property type="entry name" value="PAIRED MESODERM HOMEOBOX PROTEIN 2B"/>
    <property type="match status" value="1"/>
</dbReference>
<dbReference type="Pfam" id="PF00046">
    <property type="entry name" value="Homeodomain"/>
    <property type="match status" value="1"/>
</dbReference>
<dbReference type="SMART" id="SM00389">
    <property type="entry name" value="HOX"/>
    <property type="match status" value="1"/>
</dbReference>
<dbReference type="SUPFAM" id="SSF46689">
    <property type="entry name" value="Homeodomain-like"/>
    <property type="match status" value="1"/>
</dbReference>
<dbReference type="PROSITE" id="PS00027">
    <property type="entry name" value="HOMEOBOX_1"/>
    <property type="match status" value="1"/>
</dbReference>
<dbReference type="PROSITE" id="PS50071">
    <property type="entry name" value="HOMEOBOX_2"/>
    <property type="match status" value="1"/>
</dbReference>